<organism>
    <name type="scientific">Halobacterium salinarum (strain ATCC 700922 / JCM 11081 / NRC-1)</name>
    <name type="common">Halobacterium halobium</name>
    <dbReference type="NCBI Taxonomy" id="64091"/>
    <lineage>
        <taxon>Archaea</taxon>
        <taxon>Methanobacteriati</taxon>
        <taxon>Methanobacteriota</taxon>
        <taxon>Stenosarchaea group</taxon>
        <taxon>Halobacteria</taxon>
        <taxon>Halobacteriales</taxon>
        <taxon>Halobacteriaceae</taxon>
        <taxon>Halobacterium</taxon>
        <taxon>Halobacterium salinarum NRC-34001</taxon>
    </lineage>
</organism>
<protein>
    <recommendedName>
        <fullName evidence="1">UPF0212 protein VNG_0879C</fullName>
    </recommendedName>
</protein>
<comment type="similarity">
    <text evidence="1">Belongs to the UPF0212 family.</text>
</comment>
<dbReference type="EMBL" id="AE004437">
    <property type="protein sequence ID" value="AAG19321.1"/>
    <property type="molecule type" value="Genomic_DNA"/>
</dbReference>
<dbReference type="PIR" id="E84244">
    <property type="entry name" value="E84244"/>
</dbReference>
<dbReference type="RefSeq" id="WP_010902617.1">
    <property type="nucleotide sequence ID" value="NC_002607.1"/>
</dbReference>
<dbReference type="STRING" id="64091.VNG_0879C"/>
<dbReference type="PaxDb" id="64091-VNG_0879C"/>
<dbReference type="KEGG" id="hal:VNG_0879C"/>
<dbReference type="PATRIC" id="fig|64091.14.peg.674"/>
<dbReference type="HOGENOM" id="CLU_138334_0_0_2"/>
<dbReference type="InParanoid" id="Q9HR37"/>
<dbReference type="OrthoDB" id="63517at2157"/>
<dbReference type="PhylomeDB" id="Q9HR37"/>
<dbReference type="Proteomes" id="UP000000554">
    <property type="component" value="Chromosome"/>
</dbReference>
<dbReference type="HAMAP" id="MF_01223">
    <property type="entry name" value="UPF0212"/>
    <property type="match status" value="1"/>
</dbReference>
<dbReference type="InterPro" id="IPR007564">
    <property type="entry name" value="UPF0212"/>
</dbReference>
<dbReference type="NCBIfam" id="NF003035">
    <property type="entry name" value="PRK03922.1"/>
    <property type="match status" value="1"/>
</dbReference>
<dbReference type="PANTHER" id="PTHR42199">
    <property type="entry name" value="UPF0212 PROTEIN MJ0068"/>
    <property type="match status" value="1"/>
</dbReference>
<dbReference type="PANTHER" id="PTHR42199:SF1">
    <property type="entry name" value="UPF0212 PROTEIN TK1194"/>
    <property type="match status" value="1"/>
</dbReference>
<dbReference type="Pfam" id="PF04475">
    <property type="entry name" value="DUF555"/>
    <property type="match status" value="1"/>
</dbReference>
<dbReference type="PIRSF" id="PIRSF016934">
    <property type="entry name" value="UCP016934"/>
    <property type="match status" value="1"/>
</dbReference>
<reference key="1">
    <citation type="journal article" date="2000" name="Proc. Natl. Acad. Sci. U.S.A.">
        <title>Genome sequence of Halobacterium species NRC-1.</title>
        <authorList>
            <person name="Ng W.V."/>
            <person name="Kennedy S.P."/>
            <person name="Mahairas G.G."/>
            <person name="Berquist B."/>
            <person name="Pan M."/>
            <person name="Shukla H.D."/>
            <person name="Lasky S.R."/>
            <person name="Baliga N.S."/>
            <person name="Thorsson V."/>
            <person name="Sbrogna J."/>
            <person name="Swartzell S."/>
            <person name="Weir D."/>
            <person name="Hall J."/>
            <person name="Dahl T.A."/>
            <person name="Welti R."/>
            <person name="Goo Y.A."/>
            <person name="Leithauser B."/>
            <person name="Keller K."/>
            <person name="Cruz R."/>
            <person name="Danson M.J."/>
            <person name="Hough D.W."/>
            <person name="Maddocks D.G."/>
            <person name="Jablonski P.E."/>
            <person name="Krebs M.P."/>
            <person name="Angevine C.M."/>
            <person name="Dale H."/>
            <person name="Isenbarger T.A."/>
            <person name="Peck R.F."/>
            <person name="Pohlschroder M."/>
            <person name="Spudich J.L."/>
            <person name="Jung K.-H."/>
            <person name="Alam M."/>
            <person name="Freitas T."/>
            <person name="Hou S."/>
            <person name="Daniels C.J."/>
            <person name="Dennis P.P."/>
            <person name="Omer A.D."/>
            <person name="Ebhardt H."/>
            <person name="Lowe T.M."/>
            <person name="Liang P."/>
            <person name="Riley M."/>
            <person name="Hood L."/>
            <person name="DasSarma S."/>
        </authorList>
    </citation>
    <scope>NUCLEOTIDE SEQUENCE [LARGE SCALE GENOMIC DNA]</scope>
    <source>
        <strain>ATCC 700922 / JCM 11081 / NRC-1</strain>
    </source>
</reference>
<gene>
    <name type="ordered locus">VNG_0879C</name>
</gene>
<accession>Q9HR37</accession>
<keyword id="KW-1185">Reference proteome</keyword>
<feature type="chain" id="PRO_0000068273" description="UPF0212 protein VNG_0879C">
    <location>
        <begin position="1"/>
        <end position="121"/>
    </location>
</feature>
<sequence length="121" mass="12619">MSNYVVAMEAAWLVRDVENSDDAIGVAVSEAGKRLNDQDLDYVEVEAGVTGCPACGEGLDAAFLAANTALVGLVLELTVFNADSDEHAQRIAKSEVGGALRDVPLEVIDVIEDGDAPAEEA</sequence>
<evidence type="ECO:0000255" key="1">
    <source>
        <dbReference type="HAMAP-Rule" id="MF_01223"/>
    </source>
</evidence>
<proteinExistence type="inferred from homology"/>
<name>Y879_HALSA</name>